<dbReference type="EC" id="2.1.2.-" evidence="1"/>
<dbReference type="EMBL" id="Y18930">
    <property type="protein sequence ID" value="CAB57769.1"/>
    <property type="molecule type" value="Genomic_DNA"/>
</dbReference>
<dbReference type="EMBL" id="AE006641">
    <property type="protein sequence ID" value="AAK40850.1"/>
    <property type="molecule type" value="Genomic_DNA"/>
</dbReference>
<dbReference type="PIR" id="C90199">
    <property type="entry name" value="C90199"/>
</dbReference>
<dbReference type="RefSeq" id="WP_009991046.1">
    <property type="nucleotide sequence ID" value="NC_002754.1"/>
</dbReference>
<dbReference type="SMR" id="Q9UWT5"/>
<dbReference type="FunCoup" id="Q9UWT5">
    <property type="interactions" value="473"/>
</dbReference>
<dbReference type="STRING" id="273057.SSO0530"/>
<dbReference type="PaxDb" id="273057-SSO0530"/>
<dbReference type="EnsemblBacteria" id="AAK40850">
    <property type="protein sequence ID" value="AAK40850"/>
    <property type="gene ID" value="SSO0530"/>
</dbReference>
<dbReference type="GeneID" id="44129548"/>
<dbReference type="KEGG" id="sso:SSO0530"/>
<dbReference type="PATRIC" id="fig|273057.12.peg.529"/>
<dbReference type="eggNOG" id="arCOG00070">
    <property type="taxonomic scope" value="Archaea"/>
</dbReference>
<dbReference type="HOGENOM" id="CLU_022477_2_1_2"/>
<dbReference type="InParanoid" id="Q9UWT5"/>
<dbReference type="PhylomeDB" id="Q9UWT5"/>
<dbReference type="BRENDA" id="2.1.2.1">
    <property type="organism ID" value="6163"/>
</dbReference>
<dbReference type="UniPathway" id="UPA00288">
    <property type="reaction ID" value="UER01023"/>
</dbReference>
<dbReference type="Proteomes" id="UP000001974">
    <property type="component" value="Chromosome"/>
</dbReference>
<dbReference type="GO" id="GO:0005737">
    <property type="term" value="C:cytoplasm"/>
    <property type="evidence" value="ECO:0000318"/>
    <property type="project" value="GO_Central"/>
</dbReference>
<dbReference type="GO" id="GO:0004372">
    <property type="term" value="F:glycine hydroxymethyltransferase activity"/>
    <property type="evidence" value="ECO:0000318"/>
    <property type="project" value="GO_Central"/>
</dbReference>
<dbReference type="GO" id="GO:0030170">
    <property type="term" value="F:pyridoxal phosphate binding"/>
    <property type="evidence" value="ECO:0000318"/>
    <property type="project" value="GO_Central"/>
</dbReference>
<dbReference type="GO" id="GO:0019264">
    <property type="term" value="P:glycine biosynthetic process from serine"/>
    <property type="evidence" value="ECO:0000318"/>
    <property type="project" value="GO_Central"/>
</dbReference>
<dbReference type="GO" id="GO:0035999">
    <property type="term" value="P:tetrahydrofolate interconversion"/>
    <property type="evidence" value="ECO:0007669"/>
    <property type="project" value="InterPro"/>
</dbReference>
<dbReference type="GO" id="GO:0046653">
    <property type="term" value="P:tetrahydrofolate metabolic process"/>
    <property type="evidence" value="ECO:0000318"/>
    <property type="project" value="GO_Central"/>
</dbReference>
<dbReference type="CDD" id="cd00378">
    <property type="entry name" value="SHMT"/>
    <property type="match status" value="1"/>
</dbReference>
<dbReference type="FunFam" id="3.40.640.10:FF:000101">
    <property type="entry name" value="Serine hydroxymethyltransferase"/>
    <property type="match status" value="1"/>
</dbReference>
<dbReference type="FunFam" id="3.90.1150.10:FF:000136">
    <property type="entry name" value="Serine hydroxymethyltransferase"/>
    <property type="match status" value="1"/>
</dbReference>
<dbReference type="Gene3D" id="3.90.1150.10">
    <property type="entry name" value="Aspartate Aminotransferase, domain 1"/>
    <property type="match status" value="1"/>
</dbReference>
<dbReference type="Gene3D" id="3.40.640.10">
    <property type="entry name" value="Type I PLP-dependent aspartate aminotransferase-like (Major domain)"/>
    <property type="match status" value="1"/>
</dbReference>
<dbReference type="HAMAP" id="MF_00051">
    <property type="entry name" value="SHMT"/>
    <property type="match status" value="1"/>
</dbReference>
<dbReference type="InterPro" id="IPR015424">
    <property type="entry name" value="PyrdxlP-dep_Trfase"/>
</dbReference>
<dbReference type="InterPro" id="IPR015421">
    <property type="entry name" value="PyrdxlP-dep_Trfase_major"/>
</dbReference>
<dbReference type="InterPro" id="IPR015422">
    <property type="entry name" value="PyrdxlP-dep_Trfase_small"/>
</dbReference>
<dbReference type="InterPro" id="IPR001085">
    <property type="entry name" value="Ser_HO-MeTrfase"/>
</dbReference>
<dbReference type="InterPro" id="IPR049943">
    <property type="entry name" value="Ser_HO-MeTrfase-like"/>
</dbReference>
<dbReference type="InterPro" id="IPR019798">
    <property type="entry name" value="Ser_HO-MeTrfase_PLP_BS"/>
</dbReference>
<dbReference type="InterPro" id="IPR039429">
    <property type="entry name" value="SHMT-like_dom"/>
</dbReference>
<dbReference type="NCBIfam" id="NF000586">
    <property type="entry name" value="PRK00011.1"/>
    <property type="match status" value="1"/>
</dbReference>
<dbReference type="PANTHER" id="PTHR11680">
    <property type="entry name" value="SERINE HYDROXYMETHYLTRANSFERASE"/>
    <property type="match status" value="1"/>
</dbReference>
<dbReference type="PANTHER" id="PTHR11680:SF35">
    <property type="entry name" value="SERINE HYDROXYMETHYLTRANSFERASE 1"/>
    <property type="match status" value="1"/>
</dbReference>
<dbReference type="Pfam" id="PF00464">
    <property type="entry name" value="SHMT"/>
    <property type="match status" value="1"/>
</dbReference>
<dbReference type="PIRSF" id="PIRSF000412">
    <property type="entry name" value="SHMT"/>
    <property type="match status" value="1"/>
</dbReference>
<dbReference type="SUPFAM" id="SSF53383">
    <property type="entry name" value="PLP-dependent transferases"/>
    <property type="match status" value="1"/>
</dbReference>
<dbReference type="PROSITE" id="PS00096">
    <property type="entry name" value="SHMT"/>
    <property type="match status" value="1"/>
</dbReference>
<reference key="1">
    <citation type="journal article" date="2000" name="Genome">
        <title>Gene content and organization of a 281-kbp contig from the genome of the extremely thermophilic archaeon, Sulfolobus solfataricus P2.</title>
        <authorList>
            <person name="Charlebois R.L."/>
            <person name="Singh R.K."/>
            <person name="Chan-Weiher C.C.-Y."/>
            <person name="Allard G."/>
            <person name="Chow C."/>
            <person name="Confalonieri F."/>
            <person name="Curtis B."/>
            <person name="Duguet M."/>
            <person name="Erauso G."/>
            <person name="Faguy D."/>
            <person name="Gaasterland T."/>
            <person name="Garrett R.A."/>
            <person name="Gordon P."/>
            <person name="Jeffries A.C."/>
            <person name="Kozera C."/>
            <person name="Kushwaha N."/>
            <person name="Lafleur E."/>
            <person name="Medina N."/>
            <person name="Peng X."/>
            <person name="Penny S.L."/>
            <person name="She Q."/>
            <person name="St Jean A."/>
            <person name="van der Oost J."/>
            <person name="Young F."/>
            <person name="Zivanovic Y."/>
            <person name="Doolittle W.F."/>
            <person name="Ragan M.A."/>
            <person name="Sensen C.W."/>
        </authorList>
    </citation>
    <scope>NUCLEOTIDE SEQUENCE [LARGE SCALE GENOMIC DNA]</scope>
    <source>
        <strain>ATCC 35092 / DSM 1617 / JCM 11322 / P2</strain>
    </source>
</reference>
<reference key="2">
    <citation type="journal article" date="2001" name="Proc. Natl. Acad. Sci. U.S.A.">
        <title>The complete genome of the crenarchaeon Sulfolobus solfataricus P2.</title>
        <authorList>
            <person name="She Q."/>
            <person name="Singh R.K."/>
            <person name="Confalonieri F."/>
            <person name="Zivanovic Y."/>
            <person name="Allard G."/>
            <person name="Awayez M.J."/>
            <person name="Chan-Weiher C.C.-Y."/>
            <person name="Clausen I.G."/>
            <person name="Curtis B.A."/>
            <person name="De Moors A."/>
            <person name="Erauso G."/>
            <person name="Fletcher C."/>
            <person name="Gordon P.M.K."/>
            <person name="Heikamp-de Jong I."/>
            <person name="Jeffries A.C."/>
            <person name="Kozera C.J."/>
            <person name="Medina N."/>
            <person name="Peng X."/>
            <person name="Thi-Ngoc H.P."/>
            <person name="Redder P."/>
            <person name="Schenk M.E."/>
            <person name="Theriault C."/>
            <person name="Tolstrup N."/>
            <person name="Charlebois R.L."/>
            <person name="Doolittle W.F."/>
            <person name="Duguet M."/>
            <person name="Gaasterland T."/>
            <person name="Garrett R.A."/>
            <person name="Ragan M.A."/>
            <person name="Sensen C.W."/>
            <person name="Van der Oost J."/>
        </authorList>
    </citation>
    <scope>NUCLEOTIDE SEQUENCE [LARGE SCALE GENOMIC DNA]</scope>
    <source>
        <strain>ATCC 35092 / DSM 1617 / JCM 11322 / P2</strain>
    </source>
</reference>
<reference key="3">
    <citation type="journal article" date="1997" name="J. Bacteriol.">
        <title>Purification and properties of serine hydroxymethyltransferase from Sulfolobus solfataricus.</title>
        <authorList>
            <person name="Delle Fratte S."/>
            <person name="White R.H."/>
            <person name="Maras B."/>
            <person name="Bossa F."/>
            <person name="Schirch V."/>
        </authorList>
    </citation>
    <scope>PARTIAL PROTEIN SEQUENCE</scope>
    <scope>FUNCTION</scope>
    <scope>MODIFIED FOLATE-DEPENDENT SERINE HYDROXYMETHYLTRANSFERASE ACTIVITY</scope>
    <scope>CATALYTIC ACTIVITY</scope>
    <scope>ALDOLASE ACTIVITY</scope>
    <scope>COFACTOR</scope>
    <scope>SUBSTRATE SPECIFICITY</scope>
    <scope>ACTIVITY REGULATION</scope>
    <scope>SUBUNIT</scope>
</reference>
<evidence type="ECO:0000255" key="1">
    <source>
        <dbReference type="HAMAP-Rule" id="MF_00051"/>
    </source>
</evidence>
<evidence type="ECO:0000269" key="2">
    <source>
    </source>
</evidence>
<evidence type="ECO:0000305" key="3"/>
<evidence type="ECO:0000305" key="4">
    <source>
    </source>
</evidence>
<proteinExistence type="evidence at protein level"/>
<feature type="chain" id="PRO_0000113725" description="Serine hydroxymethyltransferase">
    <location>
        <begin position="1"/>
        <end position="433"/>
    </location>
</feature>
<feature type="binding site" evidence="1">
    <location>
        <begin position="121"/>
        <end position="123"/>
    </location>
    <ligand>
        <name>(6S)-5,6,7,8-tetrahydrofolate</name>
        <dbReference type="ChEBI" id="CHEBI:57453"/>
    </ligand>
</feature>
<feature type="binding site" evidence="1">
    <location>
        <position position="243"/>
    </location>
    <ligand>
        <name>(6S)-5,6,7,8-tetrahydrofolate</name>
        <dbReference type="ChEBI" id="CHEBI:57453"/>
    </ligand>
</feature>
<feature type="site" description="Plays an important role in substrate specificity" evidence="1">
    <location>
        <position position="226"/>
    </location>
</feature>
<feature type="modified residue" description="N6-(pyridoxal phosphate)lysine" evidence="1">
    <location>
        <position position="227"/>
    </location>
</feature>
<protein>
    <recommendedName>
        <fullName evidence="1">Serine hydroxymethyltransferase</fullName>
        <shortName evidence="1">SHMT</shortName>
        <shortName evidence="1">Serine methylase</shortName>
        <ecNumber evidence="1">2.1.2.-</ecNumber>
    </recommendedName>
</protein>
<organism>
    <name type="scientific">Saccharolobus solfataricus (strain ATCC 35092 / DSM 1617 / JCM 11322 / P2)</name>
    <name type="common">Sulfolobus solfataricus</name>
    <dbReference type="NCBI Taxonomy" id="273057"/>
    <lineage>
        <taxon>Archaea</taxon>
        <taxon>Thermoproteota</taxon>
        <taxon>Thermoprotei</taxon>
        <taxon>Sulfolobales</taxon>
        <taxon>Sulfolobaceae</taxon>
        <taxon>Saccharolobus</taxon>
    </lineage>
</organism>
<name>GLYA_SACS2</name>
<gene>
    <name evidence="1" type="primary">glyA</name>
    <name type="ordered locus">SSO0530</name>
    <name type="ORF">C22_021</name>
</gene>
<sequence>MSLPKELEKVLEITKAQNVWRRTQTLNLIASENVMSPLAESVYMSDFMSRYAEGKPYKRYYQGTKYTDEIETLTMELMNEITNSKDCDLRPTSGTIANAAVFRVLAEPGDKALIAPVQAGAHVSHTKFGTLGALGIQHIEMPFDEENINVDVDKAIKMIEEVKPKFVVLGGSLYLFPHPTKELAQHVHAVGAKLVYDAAHVYGLIEGKVWSNPLKDGADIMTVSTHKTFPGPQGGAIFSDGSEVFKQVSKTIFPWFVSNHHLHRLPATAVTAIEMKYFGESYANQILRNSKALAEALAERGFKVIGENLGYTKSHQVAVDVRQFGGGNKIAKLLEDANIIVNKNLLPYDKPEDVSDPSGLRIGVQEMTRYGMKEGEMEEIAELFKKVIIDKKDVNEVKKEVIEMRRNFLEVKYTFDDMKDLEKYSSKSLKLII</sequence>
<comment type="function">
    <text evidence="2">Catalyzes the reversible interconversion of serine and glycine with the modified folate sulfopterin serving as the one-carbon carrier. Cannot use tetrahydrofolate (THF or H4PteGlu) as the pteridine substrate. Also exhibits a pteridine-independent aldolase activity toward beta-hydroxyamino acids, producing glycine and aldehydes, via a retro-aldol mechanism. Thus, is able to catalyze the cleavage of both allo-threonine and beta-phenylserine.</text>
</comment>
<comment type="catalytic activity">
    <reaction>
        <text>5,10-methylenetetrahydrosulfopterin + glycine + H2O = tetrahydrosulfopterin + L-serine</text>
        <dbReference type="Rhea" id="RHEA:56608"/>
        <dbReference type="ChEBI" id="CHEBI:15377"/>
        <dbReference type="ChEBI" id="CHEBI:33384"/>
        <dbReference type="ChEBI" id="CHEBI:57305"/>
        <dbReference type="ChEBI" id="CHEBI:140605"/>
        <dbReference type="ChEBI" id="CHEBI:140606"/>
    </reaction>
</comment>
<comment type="cofactor">
    <cofactor evidence="1 2">
        <name>pyridoxal 5'-phosphate</name>
        <dbReference type="ChEBI" id="CHEBI:597326"/>
    </cofactor>
</comment>
<comment type="activity regulation">
    <text evidence="2">Is completely inhibited by addition of NaCNBH(3) in vitro; this reagent is a known inhibitor of PLP enzymes, that reduces the internal aldimine of PLP to the catalytically inactive and stable secondary amine. Is also inhibited by L-cysteine, which forms a thiazolidine complex with the active site PLP.</text>
</comment>
<comment type="pathway">
    <text evidence="1">Amino-acid biosynthesis; glycine biosynthesis; glycine from L-serine: step 1/1.</text>
</comment>
<comment type="subunit">
    <text evidence="1 4">Homodimer.</text>
</comment>
<comment type="subcellular location">
    <subcellularLocation>
        <location evidence="1">Cytoplasm</location>
    </subcellularLocation>
</comment>
<comment type="similarity">
    <text evidence="1 3">Belongs to the SHMT family.</text>
</comment>
<accession>Q9UWT5</accession>
<keyword id="KW-0028">Amino-acid biosynthesis</keyword>
<keyword id="KW-0963">Cytoplasm</keyword>
<keyword id="KW-0903">Direct protein sequencing</keyword>
<keyword id="KW-0554">One-carbon metabolism</keyword>
<keyword id="KW-0663">Pyridoxal phosphate</keyword>
<keyword id="KW-1185">Reference proteome</keyword>
<keyword id="KW-0808">Transferase</keyword>